<dbReference type="EMBL" id="CP000575">
    <property type="protein sequence ID" value="ABN70265.1"/>
    <property type="molecule type" value="Genomic_DNA"/>
</dbReference>
<dbReference type="RefSeq" id="WP_011839456.1">
    <property type="nucleotide sequence ID" value="NC_009033.1"/>
</dbReference>
<dbReference type="SMR" id="A3DNQ5"/>
<dbReference type="STRING" id="399550.Smar_1170"/>
<dbReference type="GeneID" id="4907723"/>
<dbReference type="KEGG" id="smr:Smar_1170"/>
<dbReference type="eggNOG" id="arCOG00865">
    <property type="taxonomic scope" value="Archaea"/>
</dbReference>
<dbReference type="HOGENOM" id="CLU_022916_0_0_2"/>
<dbReference type="OrthoDB" id="32941at2157"/>
<dbReference type="Proteomes" id="UP000000254">
    <property type="component" value="Chromosome"/>
</dbReference>
<dbReference type="GO" id="GO:0005886">
    <property type="term" value="C:plasma membrane"/>
    <property type="evidence" value="ECO:0007669"/>
    <property type="project" value="UniProtKB-SubCell"/>
</dbReference>
<dbReference type="GO" id="GO:0005524">
    <property type="term" value="F:ATP binding"/>
    <property type="evidence" value="ECO:0007669"/>
    <property type="project" value="UniProtKB-UniRule"/>
</dbReference>
<dbReference type="GO" id="GO:0046933">
    <property type="term" value="F:proton-transporting ATP synthase activity, rotational mechanism"/>
    <property type="evidence" value="ECO:0007669"/>
    <property type="project" value="UniProtKB-UniRule"/>
</dbReference>
<dbReference type="GO" id="GO:0042777">
    <property type="term" value="P:proton motive force-driven plasma membrane ATP synthesis"/>
    <property type="evidence" value="ECO:0007669"/>
    <property type="project" value="UniProtKB-UniRule"/>
</dbReference>
<dbReference type="CDD" id="cd18112">
    <property type="entry name" value="ATP-synt_V_A-type_beta_C"/>
    <property type="match status" value="1"/>
</dbReference>
<dbReference type="CDD" id="cd18118">
    <property type="entry name" value="ATP-synt_V_A-type_beta_N"/>
    <property type="match status" value="1"/>
</dbReference>
<dbReference type="CDD" id="cd01135">
    <property type="entry name" value="V_A-ATPase_B"/>
    <property type="match status" value="1"/>
</dbReference>
<dbReference type="Gene3D" id="3.40.50.12240">
    <property type="match status" value="1"/>
</dbReference>
<dbReference type="HAMAP" id="MF_00310">
    <property type="entry name" value="ATP_synth_B_arch"/>
    <property type="match status" value="1"/>
</dbReference>
<dbReference type="InterPro" id="IPR055190">
    <property type="entry name" value="ATP-synt_VA_C"/>
</dbReference>
<dbReference type="InterPro" id="IPR004100">
    <property type="entry name" value="ATPase_F1/V1/A1_a/bsu_N"/>
</dbReference>
<dbReference type="InterPro" id="IPR000194">
    <property type="entry name" value="ATPase_F1/V1/A1_a/bsu_nucl-bd"/>
</dbReference>
<dbReference type="InterPro" id="IPR027417">
    <property type="entry name" value="P-loop_NTPase"/>
</dbReference>
<dbReference type="InterPro" id="IPR022879">
    <property type="entry name" value="V-ATPase_su_B/beta"/>
</dbReference>
<dbReference type="NCBIfam" id="NF003235">
    <property type="entry name" value="PRK04196.1"/>
    <property type="match status" value="1"/>
</dbReference>
<dbReference type="PANTHER" id="PTHR43389">
    <property type="entry name" value="V-TYPE PROTON ATPASE SUBUNIT B"/>
    <property type="match status" value="1"/>
</dbReference>
<dbReference type="PANTHER" id="PTHR43389:SF4">
    <property type="entry name" value="V-TYPE PROTON ATPASE SUBUNIT B"/>
    <property type="match status" value="1"/>
</dbReference>
<dbReference type="Pfam" id="PF00006">
    <property type="entry name" value="ATP-synt_ab"/>
    <property type="match status" value="1"/>
</dbReference>
<dbReference type="Pfam" id="PF02874">
    <property type="entry name" value="ATP-synt_ab_N"/>
    <property type="match status" value="1"/>
</dbReference>
<dbReference type="Pfam" id="PF22919">
    <property type="entry name" value="ATP-synt_VA_C"/>
    <property type="match status" value="1"/>
</dbReference>
<dbReference type="PIRSF" id="PIRSF039114">
    <property type="entry name" value="V-ATPsynth_beta/V-ATPase_B"/>
    <property type="match status" value="1"/>
</dbReference>
<dbReference type="SUPFAM" id="SSF47917">
    <property type="entry name" value="C-terminal domain of alpha and beta subunits of F1 ATP synthase"/>
    <property type="match status" value="1"/>
</dbReference>
<dbReference type="SUPFAM" id="SSF52540">
    <property type="entry name" value="P-loop containing nucleoside triphosphate hydrolases"/>
    <property type="match status" value="1"/>
</dbReference>
<evidence type="ECO:0000255" key="1">
    <source>
        <dbReference type="HAMAP-Rule" id="MF_00310"/>
    </source>
</evidence>
<keyword id="KW-0066">ATP synthesis</keyword>
<keyword id="KW-1003">Cell membrane</keyword>
<keyword id="KW-0375">Hydrogen ion transport</keyword>
<keyword id="KW-0406">Ion transport</keyword>
<keyword id="KW-0472">Membrane</keyword>
<keyword id="KW-1185">Reference proteome</keyword>
<keyword id="KW-0813">Transport</keyword>
<sequence>MPSSSLAIRESPKLLKAQGSLLIAEPMKGVSYGEVVEVVLGSGETRLGQVIDVSRDATIIQVFGGVSDIDLKISKVRYRGETLKLPVSIDMLGRIFDGLGRPIDGGPPIVPEDYLDINGSPINPASRLPPSEFIETGISAIDGLNSIVRGQKLPIFSGSGLPHNRIAAQIVRQARVRGKEEKFAVVFAAIGVSYDDAMFFIENFKNYGALENAVAFINTADSPVIERIAIPRIALTAAEFLAWKHDMHVLAILTDMTNYCEALRELSAAREEVPSRRGYPGYMYTDLATIYERAGRVEGKKGSVTQMPILTMPNDDITHPIPDLTGYITEGQLVLSRQLWLKGIYPPFDILMSLSRLMKDGIGPGKTREDHRGVFMQLYSAYAEGVRLRELAVVVGTEALSARDRKYLEFADRFEKEFIGQGEYERRTIEETLDKGWELLAILPEDELKHVRIEHIRKYHPKYRGKTSR</sequence>
<accession>A3DNQ5</accession>
<reference key="1">
    <citation type="journal article" date="2009" name="BMC Genomics">
        <title>The complete genome sequence of Staphylothermus marinus reveals differences in sulfur metabolism among heterotrophic Crenarchaeota.</title>
        <authorList>
            <person name="Anderson I.J."/>
            <person name="Dharmarajan L."/>
            <person name="Rodriguez J."/>
            <person name="Hooper S."/>
            <person name="Porat I."/>
            <person name="Ulrich L.E."/>
            <person name="Elkins J.G."/>
            <person name="Mavromatis K."/>
            <person name="Sun H."/>
            <person name="Land M."/>
            <person name="Lapidus A."/>
            <person name="Lucas S."/>
            <person name="Barry K."/>
            <person name="Huber H."/>
            <person name="Zhulin I.B."/>
            <person name="Whitman W.B."/>
            <person name="Mukhopadhyay B."/>
            <person name="Woese C."/>
            <person name="Bristow J."/>
            <person name="Kyrpides N."/>
        </authorList>
    </citation>
    <scope>NUCLEOTIDE SEQUENCE [LARGE SCALE GENOMIC DNA]</scope>
    <source>
        <strain>ATCC 43588 / DSM 3639 / JCM 9404 / F1</strain>
    </source>
</reference>
<reference key="2">
    <citation type="journal article" date="2009" name="Stand. Genomic Sci.">
        <title>Complete genome sequence of Staphylothermus marinus Stetter and Fiala 1986 type strain F1.</title>
        <authorList>
            <person name="Anderson I.J."/>
            <person name="Sun H."/>
            <person name="Lapidus A."/>
            <person name="Copeland A."/>
            <person name="Glavina Del Rio T."/>
            <person name="Tice H."/>
            <person name="Dalin E."/>
            <person name="Lucas S."/>
            <person name="Barry K."/>
            <person name="Land M."/>
            <person name="Richardson P."/>
            <person name="Huber H."/>
            <person name="Kyrpides N.C."/>
        </authorList>
    </citation>
    <scope>NUCLEOTIDE SEQUENCE [LARGE SCALE GENOMIC DNA]</scope>
    <source>
        <strain>ATCC 43588 / DSM 3639 / JCM 9404 / F1</strain>
    </source>
</reference>
<organism>
    <name type="scientific">Staphylothermus marinus (strain ATCC 43588 / DSM 3639 / JCM 9404 / F1)</name>
    <dbReference type="NCBI Taxonomy" id="399550"/>
    <lineage>
        <taxon>Archaea</taxon>
        <taxon>Thermoproteota</taxon>
        <taxon>Thermoprotei</taxon>
        <taxon>Desulfurococcales</taxon>
        <taxon>Desulfurococcaceae</taxon>
        <taxon>Staphylothermus</taxon>
    </lineage>
</organism>
<protein>
    <recommendedName>
        <fullName evidence="1">A-type ATP synthase subunit B</fullName>
    </recommendedName>
</protein>
<feature type="chain" id="PRO_0000322507" description="A-type ATP synthase subunit B">
    <location>
        <begin position="1"/>
        <end position="469"/>
    </location>
</feature>
<comment type="function">
    <text evidence="1">Component of the A-type ATP synthase that produces ATP from ADP in the presence of a proton gradient across the membrane. The B chain is a regulatory subunit.</text>
</comment>
<comment type="subunit">
    <text evidence="1">Has multiple subunits with at least A(3), B(3), C, D, E, F, H, I and proteolipid K(x).</text>
</comment>
<comment type="subcellular location">
    <subcellularLocation>
        <location evidence="1">Cell membrane</location>
        <topology evidence="1">Peripheral membrane protein</topology>
    </subcellularLocation>
</comment>
<comment type="similarity">
    <text evidence="1">Belongs to the ATPase alpha/beta chains family.</text>
</comment>
<proteinExistence type="inferred from homology"/>
<name>AATB_STAMF</name>
<gene>
    <name evidence="1" type="primary">atpB</name>
    <name type="ordered locus">Smar_1170</name>
</gene>